<proteinExistence type="inferred from homology"/>
<evidence type="ECO:0000255" key="1">
    <source>
        <dbReference type="HAMAP-Rule" id="MF_00361"/>
    </source>
</evidence>
<organism>
    <name type="scientific">Coxiella burnetii (strain RSA 493 / Nine Mile phase I)</name>
    <dbReference type="NCBI Taxonomy" id="227377"/>
    <lineage>
        <taxon>Bacteria</taxon>
        <taxon>Pseudomonadati</taxon>
        <taxon>Pseudomonadota</taxon>
        <taxon>Gammaproteobacteria</taxon>
        <taxon>Legionellales</taxon>
        <taxon>Coxiellaceae</taxon>
        <taxon>Coxiella</taxon>
    </lineage>
</organism>
<reference key="1">
    <citation type="journal article" date="2003" name="Proc. Natl. Acad. Sci. U.S.A.">
        <title>Complete genome sequence of the Q-fever pathogen, Coxiella burnetii.</title>
        <authorList>
            <person name="Seshadri R."/>
            <person name="Paulsen I.T."/>
            <person name="Eisen J.A."/>
            <person name="Read T.D."/>
            <person name="Nelson K.E."/>
            <person name="Nelson W.C."/>
            <person name="Ward N.L."/>
            <person name="Tettelin H."/>
            <person name="Davidsen T.M."/>
            <person name="Beanan M.J."/>
            <person name="DeBoy R.T."/>
            <person name="Daugherty S.C."/>
            <person name="Brinkac L.M."/>
            <person name="Madupu R."/>
            <person name="Dodson R.J."/>
            <person name="Khouri H.M."/>
            <person name="Lee K.H."/>
            <person name="Carty H.A."/>
            <person name="Scanlan D."/>
            <person name="Heinzen R.A."/>
            <person name="Thompson H.A."/>
            <person name="Samuel J.E."/>
            <person name="Fraser C.M."/>
            <person name="Heidelberg J.F."/>
        </authorList>
    </citation>
    <scope>NUCLEOTIDE SEQUENCE [LARGE SCALE GENOMIC DNA]</scope>
    <source>
        <strain>RSA 493 / Nine Mile phase I</strain>
    </source>
</reference>
<dbReference type="EC" id="2.7.1.23" evidence="1"/>
<dbReference type="EMBL" id="AE016828">
    <property type="protein sequence ID" value="AAO90802.1"/>
    <property type="molecule type" value="Genomic_DNA"/>
</dbReference>
<dbReference type="RefSeq" id="NP_820288.1">
    <property type="nucleotide sequence ID" value="NC_002971.3"/>
</dbReference>
<dbReference type="RefSeq" id="WP_005772537.1">
    <property type="nucleotide sequence ID" value="NZ_CCYB01000030.1"/>
</dbReference>
<dbReference type="SMR" id="Q83C38"/>
<dbReference type="STRING" id="227377.CBU_1296"/>
<dbReference type="DNASU" id="1209201"/>
<dbReference type="EnsemblBacteria" id="AAO90802">
    <property type="protein sequence ID" value="AAO90802"/>
    <property type="gene ID" value="CBU_1296"/>
</dbReference>
<dbReference type="GeneID" id="1209201"/>
<dbReference type="KEGG" id="cbu:CBU_1296"/>
<dbReference type="PATRIC" id="fig|227377.7.peg.1291"/>
<dbReference type="eggNOG" id="COG0061">
    <property type="taxonomic scope" value="Bacteria"/>
</dbReference>
<dbReference type="HOGENOM" id="CLU_008831_0_1_6"/>
<dbReference type="OrthoDB" id="9774737at2"/>
<dbReference type="Proteomes" id="UP000002671">
    <property type="component" value="Chromosome"/>
</dbReference>
<dbReference type="GO" id="GO:0005737">
    <property type="term" value="C:cytoplasm"/>
    <property type="evidence" value="ECO:0007669"/>
    <property type="project" value="UniProtKB-SubCell"/>
</dbReference>
<dbReference type="GO" id="GO:0005524">
    <property type="term" value="F:ATP binding"/>
    <property type="evidence" value="ECO:0007669"/>
    <property type="project" value="UniProtKB-KW"/>
</dbReference>
<dbReference type="GO" id="GO:0046872">
    <property type="term" value="F:metal ion binding"/>
    <property type="evidence" value="ECO:0007669"/>
    <property type="project" value="UniProtKB-UniRule"/>
</dbReference>
<dbReference type="GO" id="GO:0051287">
    <property type="term" value="F:NAD binding"/>
    <property type="evidence" value="ECO:0007669"/>
    <property type="project" value="UniProtKB-ARBA"/>
</dbReference>
<dbReference type="GO" id="GO:0003951">
    <property type="term" value="F:NAD+ kinase activity"/>
    <property type="evidence" value="ECO:0000318"/>
    <property type="project" value="GO_Central"/>
</dbReference>
<dbReference type="GO" id="GO:0019674">
    <property type="term" value="P:NAD metabolic process"/>
    <property type="evidence" value="ECO:0007669"/>
    <property type="project" value="InterPro"/>
</dbReference>
<dbReference type="GO" id="GO:0006741">
    <property type="term" value="P:NADP biosynthetic process"/>
    <property type="evidence" value="ECO:0000318"/>
    <property type="project" value="GO_Central"/>
</dbReference>
<dbReference type="FunFam" id="2.60.200.30:FF:000009">
    <property type="entry name" value="Poly(P)/ATP NAD kinase"/>
    <property type="match status" value="1"/>
</dbReference>
<dbReference type="Gene3D" id="3.40.50.10330">
    <property type="entry name" value="Probable inorganic polyphosphate/atp-NAD kinase, domain 1"/>
    <property type="match status" value="1"/>
</dbReference>
<dbReference type="Gene3D" id="2.60.200.30">
    <property type="entry name" value="Probable inorganic polyphosphate/atp-NAD kinase, domain 2"/>
    <property type="match status" value="1"/>
</dbReference>
<dbReference type="HAMAP" id="MF_00361">
    <property type="entry name" value="NAD_kinase"/>
    <property type="match status" value="1"/>
</dbReference>
<dbReference type="InterPro" id="IPR017438">
    <property type="entry name" value="ATP-NAD_kinase_N"/>
</dbReference>
<dbReference type="InterPro" id="IPR017437">
    <property type="entry name" value="ATP-NAD_kinase_PpnK-typ_C"/>
</dbReference>
<dbReference type="InterPro" id="IPR016064">
    <property type="entry name" value="NAD/diacylglycerol_kinase_sf"/>
</dbReference>
<dbReference type="InterPro" id="IPR002504">
    <property type="entry name" value="NADK"/>
</dbReference>
<dbReference type="NCBIfam" id="NF002306">
    <property type="entry name" value="PRK01231.1"/>
    <property type="match status" value="1"/>
</dbReference>
<dbReference type="PANTHER" id="PTHR20275">
    <property type="entry name" value="NAD KINASE"/>
    <property type="match status" value="1"/>
</dbReference>
<dbReference type="PANTHER" id="PTHR20275:SF0">
    <property type="entry name" value="NAD KINASE"/>
    <property type="match status" value="1"/>
</dbReference>
<dbReference type="Pfam" id="PF01513">
    <property type="entry name" value="NAD_kinase"/>
    <property type="match status" value="1"/>
</dbReference>
<dbReference type="Pfam" id="PF20143">
    <property type="entry name" value="NAD_kinase_C"/>
    <property type="match status" value="1"/>
</dbReference>
<dbReference type="SUPFAM" id="SSF111331">
    <property type="entry name" value="NAD kinase/diacylglycerol kinase-like"/>
    <property type="match status" value="1"/>
</dbReference>
<accession>Q83C38</accession>
<sequence length="299" mass="32892">MLKIVSKPSFNRIALMGREGVEGVPETLAALKDYLVSLNREVILEENAAHMIDGSRLLTVPANDLKKKADLLIVVGGDGSLLNAAHIAVPQQLPVLGINRGRLGFLTDIPPNELTQISDILDGHYREEVRFLLEGTVEEGDEIVAQGIALNDIVLLPGNAPKMIEFDIFINDEFVCNQRADGLIITTPTGSTAYALSGGGPILHPQLNAMALVPMFPHTLSSRPIVVDAESQIKITISPENDVSPYVSNDGQERVSIKPGGNVYTRKYHYPLHLIHPTDYNYYDTLRRKLDWEKRAAKV</sequence>
<protein>
    <recommendedName>
        <fullName evidence="1">NAD kinase</fullName>
        <ecNumber evidence="1">2.7.1.23</ecNumber>
    </recommendedName>
    <alternativeName>
        <fullName evidence="1">ATP-dependent NAD kinase</fullName>
    </alternativeName>
</protein>
<name>NADK_COXBU</name>
<comment type="function">
    <text evidence="1">Involved in the regulation of the intracellular balance of NAD and NADP, and is a key enzyme in the biosynthesis of NADP. Catalyzes specifically the phosphorylation on 2'-hydroxyl of the adenosine moiety of NAD to yield NADP.</text>
</comment>
<comment type="catalytic activity">
    <reaction evidence="1">
        <text>NAD(+) + ATP = ADP + NADP(+) + H(+)</text>
        <dbReference type="Rhea" id="RHEA:18629"/>
        <dbReference type="ChEBI" id="CHEBI:15378"/>
        <dbReference type="ChEBI" id="CHEBI:30616"/>
        <dbReference type="ChEBI" id="CHEBI:57540"/>
        <dbReference type="ChEBI" id="CHEBI:58349"/>
        <dbReference type="ChEBI" id="CHEBI:456216"/>
        <dbReference type="EC" id="2.7.1.23"/>
    </reaction>
</comment>
<comment type="cofactor">
    <cofactor evidence="1">
        <name>a divalent metal cation</name>
        <dbReference type="ChEBI" id="CHEBI:60240"/>
    </cofactor>
</comment>
<comment type="subcellular location">
    <subcellularLocation>
        <location evidence="1">Cytoplasm</location>
    </subcellularLocation>
</comment>
<comment type="similarity">
    <text evidence="1">Belongs to the NAD kinase family.</text>
</comment>
<keyword id="KW-0067">ATP-binding</keyword>
<keyword id="KW-0963">Cytoplasm</keyword>
<keyword id="KW-0418">Kinase</keyword>
<keyword id="KW-0520">NAD</keyword>
<keyword id="KW-0521">NADP</keyword>
<keyword id="KW-0547">Nucleotide-binding</keyword>
<keyword id="KW-1185">Reference proteome</keyword>
<keyword id="KW-0808">Transferase</keyword>
<feature type="chain" id="PRO_0000120615" description="NAD kinase">
    <location>
        <begin position="1"/>
        <end position="299"/>
    </location>
</feature>
<feature type="active site" description="Proton acceptor" evidence="1">
    <location>
        <position position="78"/>
    </location>
</feature>
<feature type="binding site" evidence="1">
    <location>
        <begin position="78"/>
        <end position="79"/>
    </location>
    <ligand>
        <name>NAD(+)</name>
        <dbReference type="ChEBI" id="CHEBI:57540"/>
    </ligand>
</feature>
<feature type="binding site" evidence="1">
    <location>
        <begin position="151"/>
        <end position="152"/>
    </location>
    <ligand>
        <name>NAD(+)</name>
        <dbReference type="ChEBI" id="CHEBI:57540"/>
    </ligand>
</feature>
<feature type="binding site" evidence="1">
    <location>
        <position position="162"/>
    </location>
    <ligand>
        <name>NAD(+)</name>
        <dbReference type="ChEBI" id="CHEBI:57540"/>
    </ligand>
</feature>
<feature type="binding site" evidence="1">
    <location>
        <position position="179"/>
    </location>
    <ligand>
        <name>NAD(+)</name>
        <dbReference type="ChEBI" id="CHEBI:57540"/>
    </ligand>
</feature>
<feature type="binding site" evidence="1">
    <location>
        <position position="181"/>
    </location>
    <ligand>
        <name>NAD(+)</name>
        <dbReference type="ChEBI" id="CHEBI:57540"/>
    </ligand>
</feature>
<feature type="binding site" evidence="1">
    <location>
        <begin position="192"/>
        <end position="197"/>
    </location>
    <ligand>
        <name>NAD(+)</name>
        <dbReference type="ChEBI" id="CHEBI:57540"/>
    </ligand>
</feature>
<feature type="binding site" evidence="1">
    <location>
        <position position="252"/>
    </location>
    <ligand>
        <name>NAD(+)</name>
        <dbReference type="ChEBI" id="CHEBI:57540"/>
    </ligand>
</feature>
<gene>
    <name evidence="1" type="primary">nadK</name>
    <name type="ordered locus">CBU_1296</name>
</gene>